<organism>
    <name type="scientific">Oryza nivara</name>
    <name type="common">Indian wild rice</name>
    <name type="synonym">Oryza sativa f. spontanea</name>
    <dbReference type="NCBI Taxonomy" id="4536"/>
    <lineage>
        <taxon>Eukaryota</taxon>
        <taxon>Viridiplantae</taxon>
        <taxon>Streptophyta</taxon>
        <taxon>Embryophyta</taxon>
        <taxon>Tracheophyta</taxon>
        <taxon>Spermatophyta</taxon>
        <taxon>Magnoliopsida</taxon>
        <taxon>Liliopsida</taxon>
        <taxon>Poales</taxon>
        <taxon>Poaceae</taxon>
        <taxon>BOP clade</taxon>
        <taxon>Oryzoideae</taxon>
        <taxon>Oryzeae</taxon>
        <taxon>Oryzinae</taxon>
        <taxon>Oryza</taxon>
    </lineage>
</organism>
<protein>
    <recommendedName>
        <fullName evidence="1">Large ribosomal subunit protein bL36c</fullName>
    </recommendedName>
    <alternativeName>
        <fullName evidence="2">50S ribosomal protein L36, chloroplastic</fullName>
    </alternativeName>
</protein>
<comment type="subcellular location">
    <subcellularLocation>
        <location>Plastid</location>
        <location>Chloroplast</location>
    </subcellularLocation>
</comment>
<comment type="similarity">
    <text evidence="1">Belongs to the bacterial ribosomal protein bL36 family.</text>
</comment>
<gene>
    <name evidence="1" type="primary">rpl36</name>
</gene>
<geneLocation type="chloroplast"/>
<dbReference type="EMBL" id="AP006728">
    <property type="protein sequence ID" value="BAD26812.1"/>
    <property type="molecule type" value="Genomic_DNA"/>
</dbReference>
<dbReference type="RefSeq" id="YP_052783.1">
    <property type="nucleotide sequence ID" value="NC_005973.1"/>
</dbReference>
<dbReference type="SMR" id="Q6ENE0"/>
<dbReference type="STRING" id="4536.Q6ENE0"/>
<dbReference type="GeneID" id="2885945"/>
<dbReference type="Proteomes" id="UP000006591">
    <property type="component" value="Chloroplast"/>
</dbReference>
<dbReference type="GO" id="GO:0009507">
    <property type="term" value="C:chloroplast"/>
    <property type="evidence" value="ECO:0007669"/>
    <property type="project" value="UniProtKB-SubCell"/>
</dbReference>
<dbReference type="GO" id="GO:0009536">
    <property type="term" value="C:plastid"/>
    <property type="evidence" value="ECO:0000305"/>
    <property type="project" value="Gramene"/>
</dbReference>
<dbReference type="GO" id="GO:1990904">
    <property type="term" value="C:ribonucleoprotein complex"/>
    <property type="evidence" value="ECO:0007669"/>
    <property type="project" value="UniProtKB-KW"/>
</dbReference>
<dbReference type="GO" id="GO:0005840">
    <property type="term" value="C:ribosome"/>
    <property type="evidence" value="ECO:0007669"/>
    <property type="project" value="UniProtKB-KW"/>
</dbReference>
<dbReference type="GO" id="GO:0003735">
    <property type="term" value="F:structural constituent of ribosome"/>
    <property type="evidence" value="ECO:0007669"/>
    <property type="project" value="InterPro"/>
</dbReference>
<dbReference type="GO" id="GO:0006412">
    <property type="term" value="P:translation"/>
    <property type="evidence" value="ECO:0007669"/>
    <property type="project" value="UniProtKB-UniRule"/>
</dbReference>
<dbReference type="HAMAP" id="MF_00251">
    <property type="entry name" value="Ribosomal_bL36"/>
    <property type="match status" value="1"/>
</dbReference>
<dbReference type="InterPro" id="IPR000473">
    <property type="entry name" value="Ribosomal_bL36"/>
</dbReference>
<dbReference type="InterPro" id="IPR035977">
    <property type="entry name" value="Ribosomal_bL36_sp"/>
</dbReference>
<dbReference type="NCBIfam" id="TIGR01022">
    <property type="entry name" value="rpmJ_bact"/>
    <property type="match status" value="1"/>
</dbReference>
<dbReference type="PANTHER" id="PTHR42888">
    <property type="entry name" value="50S RIBOSOMAL PROTEIN L36, CHLOROPLASTIC"/>
    <property type="match status" value="1"/>
</dbReference>
<dbReference type="PANTHER" id="PTHR42888:SF1">
    <property type="entry name" value="LARGE RIBOSOMAL SUBUNIT PROTEIN BL36C"/>
    <property type="match status" value="1"/>
</dbReference>
<dbReference type="Pfam" id="PF00444">
    <property type="entry name" value="Ribosomal_L36"/>
    <property type="match status" value="1"/>
</dbReference>
<dbReference type="SUPFAM" id="SSF57840">
    <property type="entry name" value="Ribosomal protein L36"/>
    <property type="match status" value="1"/>
</dbReference>
<dbReference type="PROSITE" id="PS00828">
    <property type="entry name" value="RIBOSOMAL_L36"/>
    <property type="match status" value="1"/>
</dbReference>
<accession>Q6ENE0</accession>
<feature type="chain" id="PRO_0000126333" description="Large ribosomal subunit protein bL36c">
    <location>
        <begin position="1"/>
        <end position="37"/>
    </location>
</feature>
<proteinExistence type="inferred from homology"/>
<sequence length="37" mass="4447">MKIRASVRKICTKCRLIRRRGRIRVICSNPKHKQRQG</sequence>
<evidence type="ECO:0000255" key="1">
    <source>
        <dbReference type="HAMAP-Rule" id="MF_00251"/>
    </source>
</evidence>
<evidence type="ECO:0000305" key="2"/>
<evidence type="ECO:0000312" key="3">
    <source>
        <dbReference type="Proteomes" id="UP000006591"/>
    </source>
</evidence>
<name>RK36_ORYNI</name>
<keyword id="KW-0150">Chloroplast</keyword>
<keyword id="KW-0934">Plastid</keyword>
<keyword id="KW-1185">Reference proteome</keyword>
<keyword id="KW-0687">Ribonucleoprotein</keyword>
<keyword id="KW-0689">Ribosomal protein</keyword>
<reference key="1">
    <citation type="journal article" date="2004" name="Gene">
        <title>The complete nucleotide sequence of wild rice (Oryza nivara) chloroplast genome: first genome wide comparative sequence analysis of wild and cultivated rice.</title>
        <authorList>
            <person name="Masood M.S."/>
            <person name="Nishikawa T."/>
            <person name="Fukuoka S."/>
            <person name="Njenga P.K."/>
            <person name="Tsudzuki T."/>
            <person name="Kadowaki K."/>
        </authorList>
    </citation>
    <scope>NUCLEOTIDE SEQUENCE [LARGE SCALE GENOMIC DNA]</scope>
    <source>
        <strain evidence="3">cv. SL10</strain>
    </source>
</reference>